<feature type="chain" id="PRO_0000097087" description="Protein tyrosine phosphatase receptor type C-associated protein">
    <location>
        <begin position="1"/>
        <end position="206"/>
    </location>
</feature>
<feature type="transmembrane region" description="Helical" evidence="1">
    <location>
        <begin position="34"/>
        <end position="54"/>
    </location>
</feature>
<feature type="region of interest" description="Disordered" evidence="2">
    <location>
        <begin position="98"/>
        <end position="173"/>
    </location>
</feature>
<feature type="compositionally biased region" description="Low complexity" evidence="2">
    <location>
        <begin position="161"/>
        <end position="173"/>
    </location>
</feature>
<feature type="modified residue" description="Phosphoserine" evidence="5">
    <location>
        <position position="99"/>
    </location>
</feature>
<feature type="modified residue" description="Phosphoserine" evidence="5">
    <location>
        <position position="153"/>
    </location>
</feature>
<feature type="sequence variant" id="VAR_061698" description="In dbSNP:rs60969594.">
    <original>G</original>
    <variation>E</variation>
    <location>
        <position position="128"/>
    </location>
</feature>
<reference key="1">
    <citation type="journal article" date="1994" name="J. Biol. Chem.">
        <title>LPAP, a novel 32-kDa phosphoprotein that interacts with CD45 in human lymphocytes.</title>
        <authorList>
            <person name="Schraven B."/>
            <person name="Schoenhaut D."/>
            <person name="Bruyns E."/>
            <person name="Koretzky G."/>
            <person name="Eckerskorn C."/>
            <person name="Wallich R."/>
            <person name="Kirchgessner H."/>
            <person name="Sakorafas P."/>
            <person name="Labkovsky B."/>
            <person name="Ratnofsky S."/>
            <person name="Meuer S."/>
        </authorList>
    </citation>
    <scope>NUCLEOTIDE SEQUENCE [MRNA]</scope>
</reference>
<reference key="2">
    <citation type="journal article" date="1996" name="Genomics">
        <title>Sequence, genomic organization, and chromosomal localization of the human LPAP (PTPRCAP) and mouse CD45-AP/LSM-1 genes.</title>
        <authorList>
            <person name="Bruyns E."/>
            <person name="Mincheva A."/>
            <person name="Bruyns R.M."/>
            <person name="Kirchgessner H."/>
            <person name="Weitz S."/>
            <person name="Lichter P."/>
            <person name="Meuer S."/>
            <person name="Schraven B."/>
        </authorList>
    </citation>
    <scope>NUCLEOTIDE SEQUENCE [GENOMIC DNA]</scope>
</reference>
<reference key="3">
    <citation type="submission" date="2004-06" db="EMBL/GenBank/DDBJ databases">
        <title>Cloning of human full open reading frames in Gateway(TM) system entry vector (pDONR201).</title>
        <authorList>
            <person name="Ebert L."/>
            <person name="Schick M."/>
            <person name="Neubert P."/>
            <person name="Schatten R."/>
            <person name="Henze S."/>
            <person name="Korn B."/>
        </authorList>
    </citation>
    <scope>NUCLEOTIDE SEQUENCE [LARGE SCALE MRNA]</scope>
</reference>
<reference key="4">
    <citation type="journal article" date="2004" name="Nat. Genet.">
        <title>Complete sequencing and characterization of 21,243 full-length human cDNAs.</title>
        <authorList>
            <person name="Ota T."/>
            <person name="Suzuki Y."/>
            <person name="Nishikawa T."/>
            <person name="Otsuki T."/>
            <person name="Sugiyama T."/>
            <person name="Irie R."/>
            <person name="Wakamatsu A."/>
            <person name="Hayashi K."/>
            <person name="Sato H."/>
            <person name="Nagai K."/>
            <person name="Kimura K."/>
            <person name="Makita H."/>
            <person name="Sekine M."/>
            <person name="Obayashi M."/>
            <person name="Nishi T."/>
            <person name="Shibahara T."/>
            <person name="Tanaka T."/>
            <person name="Ishii S."/>
            <person name="Yamamoto J."/>
            <person name="Saito K."/>
            <person name="Kawai Y."/>
            <person name="Isono Y."/>
            <person name="Nakamura Y."/>
            <person name="Nagahari K."/>
            <person name="Murakami K."/>
            <person name="Yasuda T."/>
            <person name="Iwayanagi T."/>
            <person name="Wagatsuma M."/>
            <person name="Shiratori A."/>
            <person name="Sudo H."/>
            <person name="Hosoiri T."/>
            <person name="Kaku Y."/>
            <person name="Kodaira H."/>
            <person name="Kondo H."/>
            <person name="Sugawara M."/>
            <person name="Takahashi M."/>
            <person name="Kanda K."/>
            <person name="Yokoi T."/>
            <person name="Furuya T."/>
            <person name="Kikkawa E."/>
            <person name="Omura Y."/>
            <person name="Abe K."/>
            <person name="Kamihara K."/>
            <person name="Katsuta N."/>
            <person name="Sato K."/>
            <person name="Tanikawa M."/>
            <person name="Yamazaki M."/>
            <person name="Ninomiya K."/>
            <person name="Ishibashi T."/>
            <person name="Yamashita H."/>
            <person name="Murakawa K."/>
            <person name="Fujimori K."/>
            <person name="Tanai H."/>
            <person name="Kimata M."/>
            <person name="Watanabe M."/>
            <person name="Hiraoka S."/>
            <person name="Chiba Y."/>
            <person name="Ishida S."/>
            <person name="Ono Y."/>
            <person name="Takiguchi S."/>
            <person name="Watanabe S."/>
            <person name="Yosida M."/>
            <person name="Hotuta T."/>
            <person name="Kusano J."/>
            <person name="Kanehori K."/>
            <person name="Takahashi-Fujii A."/>
            <person name="Hara H."/>
            <person name="Tanase T.-O."/>
            <person name="Nomura Y."/>
            <person name="Togiya S."/>
            <person name="Komai F."/>
            <person name="Hara R."/>
            <person name="Takeuchi K."/>
            <person name="Arita M."/>
            <person name="Imose N."/>
            <person name="Musashino K."/>
            <person name="Yuuki H."/>
            <person name="Oshima A."/>
            <person name="Sasaki N."/>
            <person name="Aotsuka S."/>
            <person name="Yoshikawa Y."/>
            <person name="Matsunawa H."/>
            <person name="Ichihara T."/>
            <person name="Shiohata N."/>
            <person name="Sano S."/>
            <person name="Moriya S."/>
            <person name="Momiyama H."/>
            <person name="Satoh N."/>
            <person name="Takami S."/>
            <person name="Terashima Y."/>
            <person name="Suzuki O."/>
            <person name="Nakagawa S."/>
            <person name="Senoh A."/>
            <person name="Mizoguchi H."/>
            <person name="Goto Y."/>
            <person name="Shimizu F."/>
            <person name="Wakebe H."/>
            <person name="Hishigaki H."/>
            <person name="Watanabe T."/>
            <person name="Sugiyama A."/>
            <person name="Takemoto M."/>
            <person name="Kawakami B."/>
            <person name="Yamazaki M."/>
            <person name="Watanabe K."/>
            <person name="Kumagai A."/>
            <person name="Itakura S."/>
            <person name="Fukuzumi Y."/>
            <person name="Fujimori Y."/>
            <person name="Komiyama M."/>
            <person name="Tashiro H."/>
            <person name="Tanigami A."/>
            <person name="Fujiwara T."/>
            <person name="Ono T."/>
            <person name="Yamada K."/>
            <person name="Fujii Y."/>
            <person name="Ozaki K."/>
            <person name="Hirao M."/>
            <person name="Ohmori Y."/>
            <person name="Kawabata A."/>
            <person name="Hikiji T."/>
            <person name="Kobatake N."/>
            <person name="Inagaki H."/>
            <person name="Ikema Y."/>
            <person name="Okamoto S."/>
            <person name="Okitani R."/>
            <person name="Kawakami T."/>
            <person name="Noguchi S."/>
            <person name="Itoh T."/>
            <person name="Shigeta K."/>
            <person name="Senba T."/>
            <person name="Matsumura K."/>
            <person name="Nakajima Y."/>
            <person name="Mizuno T."/>
            <person name="Morinaga M."/>
            <person name="Sasaki M."/>
            <person name="Togashi T."/>
            <person name="Oyama M."/>
            <person name="Hata H."/>
            <person name="Watanabe M."/>
            <person name="Komatsu T."/>
            <person name="Mizushima-Sugano J."/>
            <person name="Satoh T."/>
            <person name="Shirai Y."/>
            <person name="Takahashi Y."/>
            <person name="Nakagawa K."/>
            <person name="Okumura K."/>
            <person name="Nagase T."/>
            <person name="Nomura N."/>
            <person name="Kikuchi H."/>
            <person name="Masuho Y."/>
            <person name="Yamashita R."/>
            <person name="Nakai K."/>
            <person name="Yada T."/>
            <person name="Nakamura Y."/>
            <person name="Ohara O."/>
            <person name="Isogai T."/>
            <person name="Sugano S."/>
        </authorList>
    </citation>
    <scope>NUCLEOTIDE SEQUENCE [LARGE SCALE MRNA]</scope>
    <source>
        <tissue>Thymus</tissue>
    </source>
</reference>
<reference key="5">
    <citation type="journal article" date="2004" name="Genome Res.">
        <title>The status, quality, and expansion of the NIH full-length cDNA project: the Mammalian Gene Collection (MGC).</title>
        <authorList>
            <consortium name="The MGC Project Team"/>
        </authorList>
    </citation>
    <scope>NUCLEOTIDE SEQUENCE [LARGE SCALE MRNA]</scope>
</reference>
<reference key="6">
    <citation type="journal article" date="1995" name="J. Biol. Chem.">
        <title>Identification of the sites of interaction between lymphocyte phosphatase-associated phosphoprotein (LPAP) and CD45.</title>
        <authorList>
            <person name="Bruyns E."/>
            <person name="Hendricks-Taylor L.R."/>
            <person name="Meuer S."/>
            <person name="Koretzky G.A."/>
            <person name="Schraven B."/>
        </authorList>
    </citation>
    <scope>INTERACTION WITH CD45</scope>
</reference>
<reference key="7">
    <citation type="journal article" date="2008" name="J. Proteome Res.">
        <title>Phosphorylation analysis of primary human T lymphocytes using sequential IMAC and titanium oxide enrichment.</title>
        <authorList>
            <person name="Carrascal M."/>
            <person name="Ovelleiro D."/>
            <person name="Casas V."/>
            <person name="Gay M."/>
            <person name="Abian J."/>
        </authorList>
    </citation>
    <scope>IDENTIFICATION BY MASS SPECTROMETRY [LARGE SCALE ANALYSIS]</scope>
    <source>
        <tissue>T-cell</tissue>
    </source>
</reference>
<reference key="8">
    <citation type="journal article" date="2009" name="Sci. Signal.">
        <title>Quantitative phosphoproteomic analysis of T cell receptor signaling reveals system-wide modulation of protein-protein interactions.</title>
        <authorList>
            <person name="Mayya V."/>
            <person name="Lundgren D.H."/>
            <person name="Hwang S.-I."/>
            <person name="Rezaul K."/>
            <person name="Wu L."/>
            <person name="Eng J.K."/>
            <person name="Rodionov V."/>
            <person name="Han D.K."/>
        </authorList>
    </citation>
    <scope>IDENTIFICATION BY MASS SPECTROMETRY [LARGE SCALE ANALYSIS]</scope>
    <source>
        <tissue>Leukemic T-cell</tissue>
    </source>
</reference>
<reference key="9">
    <citation type="journal article" date="2014" name="J. Proteomics">
        <title>An enzyme assisted RP-RPLC approach for in-depth analysis of human liver phosphoproteome.</title>
        <authorList>
            <person name="Bian Y."/>
            <person name="Song C."/>
            <person name="Cheng K."/>
            <person name="Dong M."/>
            <person name="Wang F."/>
            <person name="Huang J."/>
            <person name="Sun D."/>
            <person name="Wang L."/>
            <person name="Ye M."/>
            <person name="Zou H."/>
        </authorList>
    </citation>
    <scope>PHOSPHORYLATION [LARGE SCALE ANALYSIS] AT SER-99 AND SER-153</scope>
    <scope>IDENTIFICATION BY MASS SPECTROMETRY [LARGE SCALE ANALYSIS]</scope>
    <source>
        <tissue>Liver</tissue>
    </source>
</reference>
<organism>
    <name type="scientific">Homo sapiens</name>
    <name type="common">Human</name>
    <dbReference type="NCBI Taxonomy" id="9606"/>
    <lineage>
        <taxon>Eukaryota</taxon>
        <taxon>Metazoa</taxon>
        <taxon>Chordata</taxon>
        <taxon>Craniata</taxon>
        <taxon>Vertebrata</taxon>
        <taxon>Euteleostomi</taxon>
        <taxon>Mammalia</taxon>
        <taxon>Eutheria</taxon>
        <taxon>Euarchontoglires</taxon>
        <taxon>Primates</taxon>
        <taxon>Haplorrhini</taxon>
        <taxon>Catarrhini</taxon>
        <taxon>Hominidae</taxon>
        <taxon>Homo</taxon>
    </lineage>
</organism>
<evidence type="ECO:0000255" key="1"/>
<evidence type="ECO:0000256" key="2">
    <source>
        <dbReference type="SAM" id="MobiDB-lite"/>
    </source>
</evidence>
<evidence type="ECO:0000269" key="3">
    <source>
    </source>
</evidence>
<evidence type="ECO:0000305" key="4"/>
<evidence type="ECO:0007744" key="5">
    <source>
    </source>
</evidence>
<proteinExistence type="evidence at protein level"/>
<sequence>MALPCTLGLGMLLALPGALGSGGSAEDSVGSSSVTVVLLLLLLLLLATGLALAWRRLSRDSGGYYHPARLGAALWGRTRRLLWASPPGRWLQARAELGSTDNDLERQEDEQDTDYDHVADGGLQADPGEGEQQCGEASSPEQVPVRAEEARDSDTEGDLVLGSPGPASAGGSAEALLSDLHAFAGSAAWDDSARAAGGQGLHVTAL</sequence>
<comment type="subunit">
    <text evidence="3">Interacts with CD45/PTPRC.</text>
</comment>
<comment type="interaction">
    <interactant intactId="EBI-722217">
        <id>Q14761</id>
    </interactant>
    <interactant intactId="EBI-10303987">
        <id>Q9UHG0</id>
        <label>DCDC2</label>
    </interactant>
    <organismsDiffer>false</organismsDiffer>
    <experiments>3</experiments>
</comment>
<comment type="subcellular location">
    <subcellularLocation>
        <location evidence="4">Membrane</location>
        <topology evidence="4">Single-pass membrane protein</topology>
    </subcellularLocation>
</comment>
<comment type="PTM">
    <text>Phosphorylated on tyrosine residues.</text>
</comment>
<protein>
    <recommendedName>
        <fullName>Protein tyrosine phosphatase receptor type C-associated protein</fullName>
        <shortName>PTPRC-associated protein</shortName>
    </recommendedName>
    <alternativeName>
        <fullName>CD45-associated protein</fullName>
        <shortName>CD45-AP</shortName>
    </alternativeName>
    <alternativeName>
        <fullName>Lymphocyte phosphatase-associated phosphoprotein</fullName>
    </alternativeName>
</protein>
<keyword id="KW-0472">Membrane</keyword>
<keyword id="KW-0597">Phosphoprotein</keyword>
<keyword id="KW-1267">Proteomics identification</keyword>
<keyword id="KW-1185">Reference proteome</keyword>
<keyword id="KW-0812">Transmembrane</keyword>
<keyword id="KW-1133">Transmembrane helix</keyword>
<dbReference type="EMBL" id="X81422">
    <property type="protein sequence ID" value="CAA57182.1"/>
    <property type="molecule type" value="mRNA"/>
</dbReference>
<dbReference type="EMBL" id="X97267">
    <property type="protein sequence ID" value="CAA65922.1"/>
    <property type="molecule type" value="Genomic_DNA"/>
</dbReference>
<dbReference type="EMBL" id="CR457429">
    <property type="protein sequence ID" value="CAG33710.1"/>
    <property type="molecule type" value="mRNA"/>
</dbReference>
<dbReference type="EMBL" id="AK312022">
    <property type="protein sequence ID" value="BAG34959.1"/>
    <property type="molecule type" value="mRNA"/>
</dbReference>
<dbReference type="EMBL" id="BC113859">
    <property type="protein sequence ID" value="AAI13860.1"/>
    <property type="molecule type" value="mRNA"/>
</dbReference>
<dbReference type="EMBL" id="BC114467">
    <property type="protein sequence ID" value="AAI14468.1"/>
    <property type="molecule type" value="mRNA"/>
</dbReference>
<dbReference type="CCDS" id="CCDS8163.1"/>
<dbReference type="PIR" id="A55412">
    <property type="entry name" value="A55412"/>
</dbReference>
<dbReference type="RefSeq" id="NP_005599.1">
    <property type="nucleotide sequence ID" value="NM_005608.3"/>
</dbReference>
<dbReference type="BioGRID" id="111754">
    <property type="interactions" value="15"/>
</dbReference>
<dbReference type="CORUM" id="Q14761"/>
<dbReference type="FunCoup" id="Q14761">
    <property type="interactions" value="434"/>
</dbReference>
<dbReference type="IntAct" id="Q14761">
    <property type="interactions" value="14"/>
</dbReference>
<dbReference type="STRING" id="9606.ENSP00000325589"/>
<dbReference type="BindingDB" id="Q14761"/>
<dbReference type="ChEMBL" id="CHEMBL4806"/>
<dbReference type="GlyGen" id="Q14761">
    <property type="glycosylation" value="1 site, 1 O-linked glycan (1 site)"/>
</dbReference>
<dbReference type="iPTMnet" id="Q14761"/>
<dbReference type="PhosphoSitePlus" id="Q14761"/>
<dbReference type="BioMuta" id="PTPRCAP"/>
<dbReference type="DMDM" id="22001841"/>
<dbReference type="MassIVE" id="Q14761"/>
<dbReference type="PaxDb" id="9606-ENSP00000325589"/>
<dbReference type="PeptideAtlas" id="Q14761"/>
<dbReference type="ProteomicsDB" id="60156"/>
<dbReference type="Antibodypedia" id="16508">
    <property type="antibodies" value="114 antibodies from 26 providers"/>
</dbReference>
<dbReference type="DNASU" id="5790"/>
<dbReference type="Ensembl" id="ENST00000326294.4">
    <property type="protein sequence ID" value="ENSP00000325589.3"/>
    <property type="gene ID" value="ENSG00000213402.3"/>
</dbReference>
<dbReference type="GeneID" id="5790"/>
<dbReference type="KEGG" id="hsa:5790"/>
<dbReference type="MANE-Select" id="ENST00000326294.4">
    <property type="protein sequence ID" value="ENSP00000325589.3"/>
    <property type="RefSeq nucleotide sequence ID" value="NM_005608.3"/>
    <property type="RefSeq protein sequence ID" value="NP_005599.1"/>
</dbReference>
<dbReference type="UCSC" id="uc001oli.2">
    <property type="organism name" value="human"/>
</dbReference>
<dbReference type="AGR" id="HGNC:9667"/>
<dbReference type="CTD" id="5790"/>
<dbReference type="DisGeNET" id="5790"/>
<dbReference type="GeneCards" id="PTPRCAP"/>
<dbReference type="HGNC" id="HGNC:9667">
    <property type="gene designation" value="PTPRCAP"/>
</dbReference>
<dbReference type="HPA" id="ENSG00000213402">
    <property type="expression patterns" value="Group enriched (intestine, lymphoid tissue)"/>
</dbReference>
<dbReference type="MIM" id="601577">
    <property type="type" value="gene"/>
</dbReference>
<dbReference type="neXtProt" id="NX_Q14761"/>
<dbReference type="OpenTargets" id="ENSG00000213402"/>
<dbReference type="PharmGKB" id="PA34012"/>
<dbReference type="VEuPathDB" id="HostDB:ENSG00000213402"/>
<dbReference type="eggNOG" id="ENOG502SG9X">
    <property type="taxonomic scope" value="Eukaryota"/>
</dbReference>
<dbReference type="GeneTree" id="ENSGT00390000017041"/>
<dbReference type="HOGENOM" id="CLU_1444125_0_0_1"/>
<dbReference type="InParanoid" id="Q14761"/>
<dbReference type="OMA" id="YHPRHLM"/>
<dbReference type="OrthoDB" id="9451766at2759"/>
<dbReference type="PAN-GO" id="Q14761">
    <property type="GO annotations" value="1 GO annotation based on evolutionary models"/>
</dbReference>
<dbReference type="PhylomeDB" id="Q14761"/>
<dbReference type="TreeFam" id="TF338317"/>
<dbReference type="PathwayCommons" id="Q14761"/>
<dbReference type="SignaLink" id="Q14761"/>
<dbReference type="SIGNOR" id="Q14761"/>
<dbReference type="BioGRID-ORCS" id="5790">
    <property type="hits" value="22 hits in 1154 CRISPR screens"/>
</dbReference>
<dbReference type="GeneWiki" id="PTPRCAP"/>
<dbReference type="GenomeRNAi" id="5790"/>
<dbReference type="Pharos" id="Q14761">
    <property type="development level" value="Tbio"/>
</dbReference>
<dbReference type="PRO" id="PR:Q14761"/>
<dbReference type="Proteomes" id="UP000005640">
    <property type="component" value="Chromosome 11"/>
</dbReference>
<dbReference type="RNAct" id="Q14761">
    <property type="molecule type" value="protein"/>
</dbReference>
<dbReference type="Bgee" id="ENSG00000213402">
    <property type="expression patterns" value="Expressed in granulocyte and 91 other cell types or tissues"/>
</dbReference>
<dbReference type="GO" id="GO:0005886">
    <property type="term" value="C:plasma membrane"/>
    <property type="evidence" value="ECO:0000314"/>
    <property type="project" value="MGI"/>
</dbReference>
<dbReference type="GO" id="GO:0006952">
    <property type="term" value="P:defense response"/>
    <property type="evidence" value="ECO:0000304"/>
    <property type="project" value="ProtInc"/>
</dbReference>
<dbReference type="InterPro" id="IPR016553">
    <property type="entry name" value="PTPRCAP"/>
</dbReference>
<dbReference type="PANTHER" id="PTHR15312">
    <property type="entry name" value="PROTEIN TYROSINE PHOSPHATASE RECEPTOR TYPE C-ASSOCIATED PROTEIN"/>
    <property type="match status" value="1"/>
</dbReference>
<dbReference type="PANTHER" id="PTHR15312:SF1">
    <property type="entry name" value="PROTEIN TYROSINE PHOSPHATASE RECEPTOR TYPE C-ASSOCIATED PROTEIN"/>
    <property type="match status" value="1"/>
</dbReference>
<dbReference type="Pfam" id="PF15713">
    <property type="entry name" value="PTPRCAP"/>
    <property type="match status" value="1"/>
</dbReference>
<dbReference type="PIRSF" id="PIRSF009325">
    <property type="entry name" value="PTPRC-associated_protein"/>
    <property type="match status" value="1"/>
</dbReference>
<accession>Q14761</accession>
<accession>B2R512</accession>
<accession>O00643</accession>
<accession>Q6I9S6</accession>
<gene>
    <name type="primary">PTPRCAP</name>
    <name type="synonym">LPAP</name>
</gene>
<name>PTCA_HUMAN</name>